<sequence length="257" mass="28792">METIITAISAPIKTLAEWLETTHNVPQAQTMTKWFEILDPNSMSTFQPENLINMVPGPSTPPPEPVSQRAGEGDVLANLVQELMISDEEGDNRPLPTPLVEEDNRPPTPLPEEDDRPLSPLPIRRRQEAQQQPEPSSSSTERPVCLYTFRIGRRCTTRPRQGQYCAAHKRADPMFSENLARSTPLGTEESRPQAKPTPTSQLTDGQQWDENALTAQEANLSSGPKLIRLLGLCKTRQILKPNNTINYDSDLQLFEMD</sequence>
<feature type="chain" id="PRO_0000377813" description="Uncharacterized protein 110R">
    <location>
        <begin position="1"/>
        <end position="257"/>
    </location>
</feature>
<feature type="region of interest" description="Disordered" evidence="1">
    <location>
        <begin position="86"/>
        <end position="119"/>
    </location>
</feature>
<feature type="region of interest" description="Disordered" evidence="1">
    <location>
        <begin position="182"/>
        <end position="206"/>
    </location>
</feature>
<feature type="compositionally biased region" description="Polar residues" evidence="1">
    <location>
        <begin position="196"/>
        <end position="206"/>
    </location>
</feature>
<protein>
    <recommendedName>
        <fullName>Uncharacterized protein 110R</fullName>
    </recommendedName>
</protein>
<proteinExistence type="predicted"/>
<gene>
    <name type="ORF">IIV3-110R</name>
</gene>
<dbReference type="EMBL" id="DQ643392">
    <property type="protein sequence ID" value="ABF82140.1"/>
    <property type="molecule type" value="Genomic_DNA"/>
</dbReference>
<dbReference type="RefSeq" id="YP_654682.1">
    <property type="nucleotide sequence ID" value="NC_008187.1"/>
</dbReference>
<dbReference type="KEGG" id="vg:4156321"/>
<dbReference type="Proteomes" id="UP000001358">
    <property type="component" value="Genome"/>
</dbReference>
<name>110R_IIV3</name>
<organism>
    <name type="scientific">Invertebrate iridescent virus 3</name>
    <name type="common">IIV-3</name>
    <name type="synonym">Mosquito iridescent virus</name>
    <dbReference type="NCBI Taxonomy" id="345201"/>
    <lineage>
        <taxon>Viruses</taxon>
        <taxon>Varidnaviria</taxon>
        <taxon>Bamfordvirae</taxon>
        <taxon>Nucleocytoviricota</taxon>
        <taxon>Megaviricetes</taxon>
        <taxon>Pimascovirales</taxon>
        <taxon>Iridoviridae</taxon>
        <taxon>Betairidovirinae</taxon>
        <taxon>Chloriridovirus</taxon>
    </lineage>
</organism>
<keyword id="KW-1185">Reference proteome</keyword>
<evidence type="ECO:0000256" key="1">
    <source>
        <dbReference type="SAM" id="MobiDB-lite"/>
    </source>
</evidence>
<reference key="1">
    <citation type="journal article" date="2006" name="J. Virol.">
        <title>Genome of invertebrate iridescent virus type 3 (mosquito iridescent virus).</title>
        <authorList>
            <person name="Delhon G."/>
            <person name="Tulman E.R."/>
            <person name="Afonso C.L."/>
            <person name="Lu Z."/>
            <person name="Becnel J.J."/>
            <person name="Moser B.A."/>
            <person name="Kutish G.F."/>
            <person name="Rock D.L."/>
        </authorList>
    </citation>
    <scope>NUCLEOTIDE SEQUENCE [LARGE SCALE GENOMIC DNA]</scope>
</reference>
<organismHost>
    <name type="scientific">Aedes vexans</name>
    <name type="common">Inland floodwater mosquito</name>
    <name type="synonym">Culex vexans</name>
    <dbReference type="NCBI Taxonomy" id="7163"/>
</organismHost>
<organismHost>
    <name type="scientific">Culex territans</name>
    <dbReference type="NCBI Taxonomy" id="42431"/>
</organismHost>
<organismHost>
    <name type="scientific">Culiseta annulata</name>
    <dbReference type="NCBI Taxonomy" id="332058"/>
</organismHost>
<organismHost>
    <name type="scientific">Ochlerotatus sollicitans</name>
    <name type="common">eastern saltmarsh mosquito</name>
    <dbReference type="NCBI Taxonomy" id="310513"/>
</organismHost>
<organismHost>
    <name type="scientific">Ochlerotatus taeniorhynchus</name>
    <name type="common">Black salt marsh mosquito</name>
    <name type="synonym">Aedes taeniorhynchus</name>
    <dbReference type="NCBI Taxonomy" id="329105"/>
</organismHost>
<organismHost>
    <name type="scientific">Psorophora ferox</name>
    <dbReference type="NCBI Taxonomy" id="7183"/>
</organismHost>
<accession>Q196V0</accession>